<accession>Q5T3I0</accession>
<accession>Q5T3I1</accession>
<accession>Q6ZUE7</accession>
<accession>Q8IWG8</accession>
<accession>Q9NXH4</accession>
<dbReference type="EMBL" id="AK000256">
    <property type="protein sequence ID" value="BAA91036.1"/>
    <property type="molecule type" value="mRNA"/>
</dbReference>
<dbReference type="EMBL" id="AK125763">
    <property type="protein sequence ID" value="BAC86278.1"/>
    <property type="molecule type" value="mRNA"/>
</dbReference>
<dbReference type="EMBL" id="AL365181">
    <property type="status" value="NOT_ANNOTATED_CDS"/>
    <property type="molecule type" value="Genomic_DNA"/>
</dbReference>
<dbReference type="EMBL" id="BC032436">
    <property type="protein sequence ID" value="AAH32436.1"/>
    <property type="molecule type" value="mRNA"/>
</dbReference>
<dbReference type="EMBL" id="BC040147">
    <property type="protein sequence ID" value="AAH40147.1"/>
    <property type="status" value="ALT_INIT"/>
    <property type="molecule type" value="mRNA"/>
</dbReference>
<dbReference type="EMBL" id="BC056904">
    <property type="status" value="NOT_ANNOTATED_CDS"/>
    <property type="molecule type" value="mRNA"/>
</dbReference>
<dbReference type="EMBL" id="CB109133">
    <property type="status" value="NOT_ANNOTATED_CDS"/>
    <property type="molecule type" value="mRNA"/>
</dbReference>
<dbReference type="RefSeq" id="NP_001383784.1">
    <molecule id="Q5T3I0-1"/>
    <property type="nucleotide sequence ID" value="NM_001396855.1"/>
</dbReference>
<dbReference type="RefSeq" id="NP_001383790.1">
    <molecule id="Q5T3I0-3"/>
    <property type="nucleotide sequence ID" value="NM_001396861.1"/>
</dbReference>
<dbReference type="FunCoup" id="Q5T3I0">
    <property type="interactions" value="774"/>
</dbReference>
<dbReference type="IntAct" id="Q5T3I0">
    <property type="interactions" value="132"/>
</dbReference>
<dbReference type="MINT" id="Q5T3I0"/>
<dbReference type="STRING" id="9606.ENSP00000396441"/>
<dbReference type="GlyGen" id="Q5T3I0">
    <property type="glycosylation" value="1 site, 1 O-linked glycan (1 site)"/>
</dbReference>
<dbReference type="iPTMnet" id="Q5T3I0"/>
<dbReference type="MetOSite" id="Q5T3I0"/>
<dbReference type="PhosphoSitePlus" id="Q5T3I0"/>
<dbReference type="SwissPalm" id="Q5T3I0"/>
<dbReference type="BioMuta" id="GPATCH4"/>
<dbReference type="DMDM" id="147644784"/>
<dbReference type="jPOST" id="Q5T3I0"/>
<dbReference type="MassIVE" id="Q5T3I0"/>
<dbReference type="PaxDb" id="9606-ENSP00000396441"/>
<dbReference type="PeptideAtlas" id="Q5T3I0"/>
<dbReference type="ProteomicsDB" id="64394">
    <molecule id="Q5T3I0-1"/>
</dbReference>
<dbReference type="ProteomicsDB" id="64395">
    <molecule id="Q5T3I0-2"/>
</dbReference>
<dbReference type="ProteomicsDB" id="64396">
    <molecule id="Q5T3I0-3"/>
</dbReference>
<dbReference type="Pumba" id="Q5T3I0"/>
<dbReference type="DNASU" id="54865"/>
<dbReference type="Ensembl" id="ENST00000710324.2">
    <molecule id="Q5T3I0-1"/>
    <property type="protein sequence ID" value="ENSP00000518204.1"/>
    <property type="gene ID" value="ENSG00000292251.1"/>
</dbReference>
<dbReference type="Ensembl" id="ENST00000710336.1">
    <molecule id="Q5T3I0-3"/>
    <property type="protein sequence ID" value="ENSP00000518217.1"/>
    <property type="gene ID" value="ENSG00000292251.1"/>
</dbReference>
<dbReference type="GeneID" id="54865"/>
<dbReference type="MANE-Select" id="ENST00000710324.2">
    <property type="protein sequence ID" value="ENSP00000518204.1"/>
    <property type="RefSeq nucleotide sequence ID" value="NM_001396855.1"/>
    <property type="RefSeq protein sequence ID" value="NP_001383784.1"/>
</dbReference>
<dbReference type="AGR" id="HGNC:25982"/>
<dbReference type="GeneCards" id="GPATCH4"/>
<dbReference type="HGNC" id="HGNC:25982">
    <property type="gene designation" value="GPATCH4"/>
</dbReference>
<dbReference type="neXtProt" id="NX_Q5T3I0"/>
<dbReference type="PharmGKB" id="PA162390084"/>
<dbReference type="eggNOG" id="KOG2809">
    <property type="taxonomic scope" value="Eukaryota"/>
</dbReference>
<dbReference type="InParanoid" id="Q5T3I0"/>
<dbReference type="OrthoDB" id="10019757at2759"/>
<dbReference type="PAN-GO" id="Q5T3I0">
    <property type="GO annotations" value="2 GO annotations based on evolutionary models"/>
</dbReference>
<dbReference type="PhylomeDB" id="Q5T3I0"/>
<dbReference type="PathwayCommons" id="Q5T3I0"/>
<dbReference type="SignaLink" id="Q5T3I0"/>
<dbReference type="CD-CODE" id="91857CE7">
    <property type="entry name" value="Nucleolus"/>
</dbReference>
<dbReference type="ChiTaRS" id="GPATCH4">
    <property type="organism name" value="human"/>
</dbReference>
<dbReference type="Pharos" id="Q5T3I0">
    <property type="development level" value="Tdark"/>
</dbReference>
<dbReference type="PRO" id="PR:Q5T3I0"/>
<dbReference type="Proteomes" id="UP000005640">
    <property type="component" value="Unplaced"/>
</dbReference>
<dbReference type="RNAct" id="Q5T3I0">
    <property type="molecule type" value="protein"/>
</dbReference>
<dbReference type="GO" id="GO:0005730">
    <property type="term" value="C:nucleolus"/>
    <property type="evidence" value="ECO:0000318"/>
    <property type="project" value="GO_Central"/>
</dbReference>
<dbReference type="GO" id="GO:0003723">
    <property type="term" value="F:RNA binding"/>
    <property type="evidence" value="ECO:0007005"/>
    <property type="project" value="UniProtKB"/>
</dbReference>
<dbReference type="InterPro" id="IPR000467">
    <property type="entry name" value="G_patch_dom"/>
</dbReference>
<dbReference type="InterPro" id="IPR050656">
    <property type="entry name" value="PINX1"/>
</dbReference>
<dbReference type="PANTHER" id="PTHR23149">
    <property type="entry name" value="G PATCH DOMAIN CONTAINING PROTEIN"/>
    <property type="match status" value="1"/>
</dbReference>
<dbReference type="PANTHER" id="PTHR23149:SF9">
    <property type="entry name" value="G PATCH DOMAIN-CONTAINING PROTEIN 4"/>
    <property type="match status" value="1"/>
</dbReference>
<dbReference type="Pfam" id="PF01585">
    <property type="entry name" value="G-patch"/>
    <property type="match status" value="1"/>
</dbReference>
<dbReference type="SMART" id="SM00443">
    <property type="entry name" value="G_patch"/>
    <property type="match status" value="1"/>
</dbReference>
<dbReference type="PROSITE" id="PS50174">
    <property type="entry name" value="G_PATCH"/>
    <property type="match status" value="1"/>
</dbReference>
<name>GPTC4_HUMAN</name>
<reference key="1">
    <citation type="journal article" date="2004" name="Nat. Genet.">
        <title>Complete sequencing and characterization of 21,243 full-length human cDNAs.</title>
        <authorList>
            <person name="Ota T."/>
            <person name="Suzuki Y."/>
            <person name="Nishikawa T."/>
            <person name="Otsuki T."/>
            <person name="Sugiyama T."/>
            <person name="Irie R."/>
            <person name="Wakamatsu A."/>
            <person name="Hayashi K."/>
            <person name="Sato H."/>
            <person name="Nagai K."/>
            <person name="Kimura K."/>
            <person name="Makita H."/>
            <person name="Sekine M."/>
            <person name="Obayashi M."/>
            <person name="Nishi T."/>
            <person name="Shibahara T."/>
            <person name="Tanaka T."/>
            <person name="Ishii S."/>
            <person name="Yamamoto J."/>
            <person name="Saito K."/>
            <person name="Kawai Y."/>
            <person name="Isono Y."/>
            <person name="Nakamura Y."/>
            <person name="Nagahari K."/>
            <person name="Murakami K."/>
            <person name="Yasuda T."/>
            <person name="Iwayanagi T."/>
            <person name="Wagatsuma M."/>
            <person name="Shiratori A."/>
            <person name="Sudo H."/>
            <person name="Hosoiri T."/>
            <person name="Kaku Y."/>
            <person name="Kodaira H."/>
            <person name="Kondo H."/>
            <person name="Sugawara M."/>
            <person name="Takahashi M."/>
            <person name="Kanda K."/>
            <person name="Yokoi T."/>
            <person name="Furuya T."/>
            <person name="Kikkawa E."/>
            <person name="Omura Y."/>
            <person name="Abe K."/>
            <person name="Kamihara K."/>
            <person name="Katsuta N."/>
            <person name="Sato K."/>
            <person name="Tanikawa M."/>
            <person name="Yamazaki M."/>
            <person name="Ninomiya K."/>
            <person name="Ishibashi T."/>
            <person name="Yamashita H."/>
            <person name="Murakawa K."/>
            <person name="Fujimori K."/>
            <person name="Tanai H."/>
            <person name="Kimata M."/>
            <person name="Watanabe M."/>
            <person name="Hiraoka S."/>
            <person name="Chiba Y."/>
            <person name="Ishida S."/>
            <person name="Ono Y."/>
            <person name="Takiguchi S."/>
            <person name="Watanabe S."/>
            <person name="Yosida M."/>
            <person name="Hotuta T."/>
            <person name="Kusano J."/>
            <person name="Kanehori K."/>
            <person name="Takahashi-Fujii A."/>
            <person name="Hara H."/>
            <person name="Tanase T.-O."/>
            <person name="Nomura Y."/>
            <person name="Togiya S."/>
            <person name="Komai F."/>
            <person name="Hara R."/>
            <person name="Takeuchi K."/>
            <person name="Arita M."/>
            <person name="Imose N."/>
            <person name="Musashino K."/>
            <person name="Yuuki H."/>
            <person name="Oshima A."/>
            <person name="Sasaki N."/>
            <person name="Aotsuka S."/>
            <person name="Yoshikawa Y."/>
            <person name="Matsunawa H."/>
            <person name="Ichihara T."/>
            <person name="Shiohata N."/>
            <person name="Sano S."/>
            <person name="Moriya S."/>
            <person name="Momiyama H."/>
            <person name="Satoh N."/>
            <person name="Takami S."/>
            <person name="Terashima Y."/>
            <person name="Suzuki O."/>
            <person name="Nakagawa S."/>
            <person name="Senoh A."/>
            <person name="Mizoguchi H."/>
            <person name="Goto Y."/>
            <person name="Shimizu F."/>
            <person name="Wakebe H."/>
            <person name="Hishigaki H."/>
            <person name="Watanabe T."/>
            <person name="Sugiyama A."/>
            <person name="Takemoto M."/>
            <person name="Kawakami B."/>
            <person name="Yamazaki M."/>
            <person name="Watanabe K."/>
            <person name="Kumagai A."/>
            <person name="Itakura S."/>
            <person name="Fukuzumi Y."/>
            <person name="Fujimori Y."/>
            <person name="Komiyama M."/>
            <person name="Tashiro H."/>
            <person name="Tanigami A."/>
            <person name="Fujiwara T."/>
            <person name="Ono T."/>
            <person name="Yamada K."/>
            <person name="Fujii Y."/>
            <person name="Ozaki K."/>
            <person name="Hirao M."/>
            <person name="Ohmori Y."/>
            <person name="Kawabata A."/>
            <person name="Hikiji T."/>
            <person name="Kobatake N."/>
            <person name="Inagaki H."/>
            <person name="Ikema Y."/>
            <person name="Okamoto S."/>
            <person name="Okitani R."/>
            <person name="Kawakami T."/>
            <person name="Noguchi S."/>
            <person name="Itoh T."/>
            <person name="Shigeta K."/>
            <person name="Senba T."/>
            <person name="Matsumura K."/>
            <person name="Nakajima Y."/>
            <person name="Mizuno T."/>
            <person name="Morinaga M."/>
            <person name="Sasaki M."/>
            <person name="Togashi T."/>
            <person name="Oyama M."/>
            <person name="Hata H."/>
            <person name="Watanabe M."/>
            <person name="Komatsu T."/>
            <person name="Mizushima-Sugano J."/>
            <person name="Satoh T."/>
            <person name="Shirai Y."/>
            <person name="Takahashi Y."/>
            <person name="Nakagawa K."/>
            <person name="Okumura K."/>
            <person name="Nagase T."/>
            <person name="Nomura N."/>
            <person name="Kikuchi H."/>
            <person name="Masuho Y."/>
            <person name="Yamashita R."/>
            <person name="Nakai K."/>
            <person name="Yada T."/>
            <person name="Nakamura Y."/>
            <person name="Ohara O."/>
            <person name="Isogai T."/>
            <person name="Sugano S."/>
        </authorList>
    </citation>
    <scope>NUCLEOTIDE SEQUENCE [LARGE SCALE MRNA] (ISOFORM 2)</scope>
    <scope>NUCLEOTIDE SEQUENCE [LARGE SCALE MRNA] OF 1-207 (ISOFORM 1)</scope>
    <source>
        <tissue>Colon mucosa</tissue>
    </source>
</reference>
<reference key="2">
    <citation type="journal article" date="2006" name="Nature">
        <title>The DNA sequence and biological annotation of human chromosome 1.</title>
        <authorList>
            <person name="Gregory S.G."/>
            <person name="Barlow K.F."/>
            <person name="McLay K.E."/>
            <person name="Kaul R."/>
            <person name="Swarbreck D."/>
            <person name="Dunham A."/>
            <person name="Scott C.E."/>
            <person name="Howe K.L."/>
            <person name="Woodfine K."/>
            <person name="Spencer C.C.A."/>
            <person name="Jones M.C."/>
            <person name="Gillson C."/>
            <person name="Searle S."/>
            <person name="Zhou Y."/>
            <person name="Kokocinski F."/>
            <person name="McDonald L."/>
            <person name="Evans R."/>
            <person name="Phillips K."/>
            <person name="Atkinson A."/>
            <person name="Cooper R."/>
            <person name="Jones C."/>
            <person name="Hall R.E."/>
            <person name="Andrews T.D."/>
            <person name="Lloyd C."/>
            <person name="Ainscough R."/>
            <person name="Almeida J.P."/>
            <person name="Ambrose K.D."/>
            <person name="Anderson F."/>
            <person name="Andrew R.W."/>
            <person name="Ashwell R.I.S."/>
            <person name="Aubin K."/>
            <person name="Babbage A.K."/>
            <person name="Bagguley C.L."/>
            <person name="Bailey J."/>
            <person name="Beasley H."/>
            <person name="Bethel G."/>
            <person name="Bird C.P."/>
            <person name="Bray-Allen S."/>
            <person name="Brown J.Y."/>
            <person name="Brown A.J."/>
            <person name="Buckley D."/>
            <person name="Burton J."/>
            <person name="Bye J."/>
            <person name="Carder C."/>
            <person name="Chapman J.C."/>
            <person name="Clark S.Y."/>
            <person name="Clarke G."/>
            <person name="Clee C."/>
            <person name="Cobley V."/>
            <person name="Collier R.E."/>
            <person name="Corby N."/>
            <person name="Coville G.J."/>
            <person name="Davies J."/>
            <person name="Deadman R."/>
            <person name="Dunn M."/>
            <person name="Earthrowl M."/>
            <person name="Ellington A.G."/>
            <person name="Errington H."/>
            <person name="Frankish A."/>
            <person name="Frankland J."/>
            <person name="French L."/>
            <person name="Garner P."/>
            <person name="Garnett J."/>
            <person name="Gay L."/>
            <person name="Ghori M.R.J."/>
            <person name="Gibson R."/>
            <person name="Gilby L.M."/>
            <person name="Gillett W."/>
            <person name="Glithero R.J."/>
            <person name="Grafham D.V."/>
            <person name="Griffiths C."/>
            <person name="Griffiths-Jones S."/>
            <person name="Grocock R."/>
            <person name="Hammond S."/>
            <person name="Harrison E.S.I."/>
            <person name="Hart E."/>
            <person name="Haugen E."/>
            <person name="Heath P.D."/>
            <person name="Holmes S."/>
            <person name="Holt K."/>
            <person name="Howden P.J."/>
            <person name="Hunt A.R."/>
            <person name="Hunt S.E."/>
            <person name="Hunter G."/>
            <person name="Isherwood J."/>
            <person name="James R."/>
            <person name="Johnson C."/>
            <person name="Johnson D."/>
            <person name="Joy A."/>
            <person name="Kay M."/>
            <person name="Kershaw J.K."/>
            <person name="Kibukawa M."/>
            <person name="Kimberley A.M."/>
            <person name="King A."/>
            <person name="Knights A.J."/>
            <person name="Lad H."/>
            <person name="Laird G."/>
            <person name="Lawlor S."/>
            <person name="Leongamornlert D.A."/>
            <person name="Lloyd D.M."/>
            <person name="Loveland J."/>
            <person name="Lovell J."/>
            <person name="Lush M.J."/>
            <person name="Lyne R."/>
            <person name="Martin S."/>
            <person name="Mashreghi-Mohammadi M."/>
            <person name="Matthews L."/>
            <person name="Matthews N.S.W."/>
            <person name="McLaren S."/>
            <person name="Milne S."/>
            <person name="Mistry S."/>
            <person name="Moore M.J.F."/>
            <person name="Nickerson T."/>
            <person name="O'Dell C.N."/>
            <person name="Oliver K."/>
            <person name="Palmeiri A."/>
            <person name="Palmer S.A."/>
            <person name="Parker A."/>
            <person name="Patel D."/>
            <person name="Pearce A.V."/>
            <person name="Peck A.I."/>
            <person name="Pelan S."/>
            <person name="Phelps K."/>
            <person name="Phillimore B.J."/>
            <person name="Plumb R."/>
            <person name="Rajan J."/>
            <person name="Raymond C."/>
            <person name="Rouse G."/>
            <person name="Saenphimmachak C."/>
            <person name="Sehra H.K."/>
            <person name="Sheridan E."/>
            <person name="Shownkeen R."/>
            <person name="Sims S."/>
            <person name="Skuce C.D."/>
            <person name="Smith M."/>
            <person name="Steward C."/>
            <person name="Subramanian S."/>
            <person name="Sycamore N."/>
            <person name="Tracey A."/>
            <person name="Tromans A."/>
            <person name="Van Helmond Z."/>
            <person name="Wall M."/>
            <person name="Wallis J.M."/>
            <person name="White S."/>
            <person name="Whitehead S.L."/>
            <person name="Wilkinson J.E."/>
            <person name="Willey D.L."/>
            <person name="Williams H."/>
            <person name="Wilming L."/>
            <person name="Wray P.W."/>
            <person name="Wu Z."/>
            <person name="Coulson A."/>
            <person name="Vaudin M."/>
            <person name="Sulston J.E."/>
            <person name="Durbin R.M."/>
            <person name="Hubbard T."/>
            <person name="Wooster R."/>
            <person name="Dunham I."/>
            <person name="Carter N.P."/>
            <person name="McVean G."/>
            <person name="Ross M.T."/>
            <person name="Harrow J."/>
            <person name="Olson M.V."/>
            <person name="Beck S."/>
            <person name="Rogers J."/>
            <person name="Bentley D.R."/>
        </authorList>
    </citation>
    <scope>NUCLEOTIDE SEQUENCE [LARGE SCALE GENOMIC DNA]</scope>
</reference>
<reference key="3">
    <citation type="journal article" date="2004" name="Genome Res.">
        <title>The status, quality, and expansion of the NIH full-length cDNA project: the Mammalian Gene Collection (MGC).</title>
        <authorList>
            <consortium name="The MGC Project Team"/>
        </authorList>
    </citation>
    <scope>NUCLEOTIDE SEQUENCE [LARGE SCALE MRNA] (ISOFORM 1)</scope>
    <source>
        <tissue>Cervix</tissue>
        <tissue>Kidney</tissue>
        <tissue>Ovary</tissue>
    </source>
</reference>
<reference key="4">
    <citation type="journal article" date="2006" name="Biochem. Biophys. Res. Commun.">
        <title>Identification of intrahepatic cholangiocarcinoma related genes by comparison with normal liver tissues using expressed sequence tags.</title>
        <authorList>
            <person name="Wang A.G."/>
            <person name="Yoon S.Y."/>
            <person name="Oh J.H."/>
            <person name="Jeon Y.J."/>
            <person name="Kim M."/>
            <person name="Kim J.M."/>
            <person name="Byun S.S."/>
            <person name="Yang J.O."/>
            <person name="Kim J.H."/>
            <person name="Kim D.G."/>
            <person name="Yeom Y.I."/>
            <person name="Yoo H.S."/>
            <person name="Kim Y.S."/>
            <person name="Kim N.S."/>
        </authorList>
    </citation>
    <scope>NUCLEOTIDE SEQUENCE [MRNA] OF 1-174 (ISOFORM 3)</scope>
</reference>
<reference key="5">
    <citation type="journal article" date="2008" name="Proc. Natl. Acad. Sci. U.S.A.">
        <title>A quantitative atlas of mitotic phosphorylation.</title>
        <authorList>
            <person name="Dephoure N."/>
            <person name="Zhou C."/>
            <person name="Villen J."/>
            <person name="Beausoleil S.A."/>
            <person name="Bakalarski C.E."/>
            <person name="Elledge S.J."/>
            <person name="Gygi S.P."/>
        </authorList>
    </citation>
    <scope>PHOSPHORYLATION [LARGE SCALE ANALYSIS] AT THR-116; SER-128; SER-130 AND SER-139</scope>
    <scope>IDENTIFICATION BY MASS SPECTROMETRY [LARGE SCALE ANALYSIS]</scope>
    <source>
        <tissue>Cervix carcinoma</tissue>
    </source>
</reference>
<reference key="6">
    <citation type="journal article" date="2009" name="Anal. Chem.">
        <title>Lys-N and trypsin cover complementary parts of the phosphoproteome in a refined SCX-based approach.</title>
        <authorList>
            <person name="Gauci S."/>
            <person name="Helbig A.O."/>
            <person name="Slijper M."/>
            <person name="Krijgsveld J."/>
            <person name="Heck A.J."/>
            <person name="Mohammed S."/>
        </authorList>
    </citation>
    <scope>ACETYLATION [LARGE SCALE ANALYSIS] AT MET-1</scope>
    <scope>IDENTIFICATION BY MASS SPECTROMETRY [LARGE SCALE ANALYSIS]</scope>
</reference>
<reference key="7">
    <citation type="journal article" date="2010" name="Sci. Signal.">
        <title>Quantitative phosphoproteomics reveals widespread full phosphorylation site occupancy during mitosis.</title>
        <authorList>
            <person name="Olsen J.V."/>
            <person name="Vermeulen M."/>
            <person name="Santamaria A."/>
            <person name="Kumar C."/>
            <person name="Miller M.L."/>
            <person name="Jensen L.J."/>
            <person name="Gnad F."/>
            <person name="Cox J."/>
            <person name="Jensen T.S."/>
            <person name="Nigg E.A."/>
            <person name="Brunak S."/>
            <person name="Mann M."/>
        </authorList>
    </citation>
    <scope>ACETYLATION [LARGE SCALE ANALYSIS] AT MET-1</scope>
    <scope>PHOSPHORYLATION [LARGE SCALE ANALYSIS] AT THR-4</scope>
    <scope>IDENTIFICATION BY MASS SPECTROMETRY [LARGE SCALE ANALYSIS]</scope>
    <source>
        <tissue>Cervix carcinoma</tissue>
    </source>
</reference>
<reference key="8">
    <citation type="journal article" date="2011" name="BMC Syst. Biol.">
        <title>Initial characterization of the human central proteome.</title>
        <authorList>
            <person name="Burkard T.R."/>
            <person name="Planyavsky M."/>
            <person name="Kaupe I."/>
            <person name="Breitwieser F.P."/>
            <person name="Buerckstuemmer T."/>
            <person name="Bennett K.L."/>
            <person name="Superti-Furga G."/>
            <person name="Colinge J."/>
        </authorList>
    </citation>
    <scope>IDENTIFICATION BY MASS SPECTROMETRY [LARGE SCALE ANALYSIS]</scope>
</reference>
<reference key="9">
    <citation type="journal article" date="2011" name="Sci. Signal.">
        <title>System-wide temporal characterization of the proteome and phosphoproteome of human embryonic stem cell differentiation.</title>
        <authorList>
            <person name="Rigbolt K.T."/>
            <person name="Prokhorova T.A."/>
            <person name="Akimov V."/>
            <person name="Henningsen J."/>
            <person name="Johansen P.T."/>
            <person name="Kratchmarova I."/>
            <person name="Kassem M."/>
            <person name="Mann M."/>
            <person name="Olsen J.V."/>
            <person name="Blagoev B."/>
        </authorList>
    </citation>
    <scope>PHOSPHORYLATION [LARGE SCALE ANALYSIS] AT SER-130</scope>
    <scope>IDENTIFICATION BY MASS SPECTROMETRY [LARGE SCALE ANALYSIS]</scope>
</reference>
<reference key="10">
    <citation type="journal article" date="2012" name="Proc. Natl. Acad. Sci. U.S.A.">
        <title>N-terminal acetylome analyses and functional insights of the N-terminal acetyltransferase NatB.</title>
        <authorList>
            <person name="Van Damme P."/>
            <person name="Lasa M."/>
            <person name="Polevoda B."/>
            <person name="Gazquez C."/>
            <person name="Elosegui-Artola A."/>
            <person name="Kim D.S."/>
            <person name="De Juan-Pardo E."/>
            <person name="Demeyer K."/>
            <person name="Hole K."/>
            <person name="Larrea E."/>
            <person name="Timmerman E."/>
            <person name="Prieto J."/>
            <person name="Arnesen T."/>
            <person name="Sherman F."/>
            <person name="Gevaert K."/>
            <person name="Aldabe R."/>
        </authorList>
    </citation>
    <scope>ACETYLATION [LARGE SCALE ANALYSIS] AT MET-1</scope>
    <scope>IDENTIFICATION BY MASS SPECTROMETRY [LARGE SCALE ANALYSIS]</scope>
</reference>
<reference key="11">
    <citation type="journal article" date="2013" name="J. Proteome Res.">
        <title>Toward a comprehensive characterization of a human cancer cell phosphoproteome.</title>
        <authorList>
            <person name="Zhou H."/>
            <person name="Di Palma S."/>
            <person name="Preisinger C."/>
            <person name="Peng M."/>
            <person name="Polat A.N."/>
            <person name="Heck A.J."/>
            <person name="Mohammed S."/>
        </authorList>
    </citation>
    <scope>PHOSPHORYLATION [LARGE SCALE ANALYSIS] AT SER-128 AND SER-130</scope>
    <scope>IDENTIFICATION BY MASS SPECTROMETRY [LARGE SCALE ANALYSIS]</scope>
    <source>
        <tissue>Cervix carcinoma</tissue>
        <tissue>Erythroleukemia</tissue>
    </source>
</reference>
<reference key="12">
    <citation type="journal article" date="2017" name="Nat. Struct. Mol. Biol.">
        <title>Site-specific mapping of the human SUMO proteome reveals co-modification with phosphorylation.</title>
        <authorList>
            <person name="Hendriks I.A."/>
            <person name="Lyon D."/>
            <person name="Young C."/>
            <person name="Jensen L.J."/>
            <person name="Vertegaal A.C."/>
            <person name="Nielsen M.L."/>
        </authorList>
    </citation>
    <scope>SUMOYLATION [LARGE SCALE ANALYSIS] AT LYS-46</scope>
    <scope>IDENTIFICATION BY MASS SPECTROMETRY [LARGE SCALE ANALYSIS]</scope>
</reference>
<keyword id="KW-0007">Acetylation</keyword>
<keyword id="KW-0025">Alternative splicing</keyword>
<keyword id="KW-0175">Coiled coil</keyword>
<keyword id="KW-1017">Isopeptide bond</keyword>
<keyword id="KW-0597">Phosphoprotein</keyword>
<keyword id="KW-1267">Proteomics identification</keyword>
<keyword id="KW-1185">Reference proteome</keyword>
<keyword id="KW-0832">Ubl conjugation</keyword>
<comment type="interaction">
    <interactant intactId="EBI-2372076">
        <id>Q5T3I0</id>
    </interactant>
    <interactant intactId="EBI-739624">
        <id>Q8NHQ1</id>
        <label>CEP70</label>
    </interactant>
    <organismsDiffer>false</organismsDiffer>
    <experiments>6</experiments>
</comment>
<comment type="interaction">
    <interactant intactId="EBI-2372076">
        <id>Q5T3I0</id>
    </interactant>
    <interactant intactId="EBI-749265">
        <id>Q8N6L0</id>
        <label>KASH5</label>
    </interactant>
    <organismsDiffer>false</organismsDiffer>
    <experiments>6</experiments>
</comment>
<comment type="alternative products">
    <event type="alternative splicing"/>
    <isoform>
        <id>Q5T3I0-1</id>
        <name>1</name>
        <sequence type="displayed"/>
    </isoform>
    <isoform>
        <id>Q5T3I0-2</id>
        <name>2</name>
        <sequence type="described" ref="VSP_025479 VSP_025480 VSP_025481"/>
    </isoform>
    <isoform>
        <id>Q5T3I0-3</id>
        <name>3</name>
        <sequence type="described" ref="VSP_040831"/>
    </isoform>
</comment>
<comment type="polymorphism">
    <text>This gene contains polymorphic substitutions in the last exon causing a frameshift variant C-terminal sequence compared to the official human genome. However, this variant sequence is in agreement with ortholog sequences.</text>
</comment>
<comment type="sequence caution" evidence="6">
    <conflict type="erroneous initiation">
        <sequence resource="EMBL-CDS" id="AAH40147"/>
    </conflict>
    <text>Truncated N-terminus.</text>
</comment>
<evidence type="ECO:0000255" key="1"/>
<evidence type="ECO:0000255" key="2">
    <source>
        <dbReference type="PROSITE-ProRule" id="PRU00092"/>
    </source>
</evidence>
<evidence type="ECO:0000256" key="3">
    <source>
        <dbReference type="SAM" id="MobiDB-lite"/>
    </source>
</evidence>
<evidence type="ECO:0000303" key="4">
    <source>
    </source>
</evidence>
<evidence type="ECO:0000303" key="5">
    <source>
    </source>
</evidence>
<evidence type="ECO:0000305" key="6"/>
<evidence type="ECO:0007744" key="7">
    <source>
    </source>
</evidence>
<evidence type="ECO:0007744" key="8">
    <source>
    </source>
</evidence>
<evidence type="ECO:0007744" key="9">
    <source>
    </source>
</evidence>
<evidence type="ECO:0007744" key="10">
    <source>
    </source>
</evidence>
<evidence type="ECO:0007744" key="11">
    <source>
    </source>
</evidence>
<evidence type="ECO:0007744" key="12">
    <source>
    </source>
</evidence>
<evidence type="ECO:0007744" key="13">
    <source>
    </source>
</evidence>
<sequence>MNVTPEVKSRGMKFAEEQLLKHGWTQGKGLGRKENGITQALRVTLKQDTHGVGHDPAKEFTNHWWNELFNKTAANLVVETGQDGVQIRSLSKETTRYNHPKPNLLYQKFVKMATLTSGGEKPNKDLESCSDDDNQGSKSPKILTDEMLLQACEGRTAHKAARLGITMKAKLARLEAQEQAFLARLKGQDPGAPQLQSESKPPKKKKKKRRQKEEEEATASERNDADEKHPEHAEQNIRKSKKKKRRHQEGKVSDEREGTTKGNEKEDAAGTSGLGELNSREQTNQSLRKGKKKKRWHHEEEKMGVLEEGGKGKEAAGSVRTEEVESRAYADPCSRRKKRQQQEEEDLNLEDRGEETVLGGGTREAESRACSDGRSRKSKKKRQQHQEEEDILDVRDEKDGGAREAESRAHTGSSSRGKRKRQQHPKKERAGVSTVQKAKKKQKKRD</sequence>
<gene>
    <name type="primary">GPATCH4</name>
    <name type="synonym">GPATC4</name>
</gene>
<proteinExistence type="evidence at protein level"/>
<feature type="chain" id="PRO_0000287462" description="G patch domain-containing protein 4">
    <location>
        <begin position="1"/>
        <end position="446"/>
    </location>
</feature>
<feature type="domain" description="G-patch" evidence="2">
    <location>
        <begin position="11"/>
        <end position="57"/>
    </location>
</feature>
<feature type="region of interest" description="Disordered" evidence="3">
    <location>
        <begin position="116"/>
        <end position="140"/>
    </location>
</feature>
<feature type="region of interest" description="Disordered" evidence="3">
    <location>
        <begin position="188"/>
        <end position="446"/>
    </location>
</feature>
<feature type="coiled-coil region" evidence="1">
    <location>
        <begin position="166"/>
        <end position="251"/>
    </location>
</feature>
<feature type="compositionally biased region" description="Basic and acidic residues" evidence="3">
    <location>
        <begin position="219"/>
        <end position="237"/>
    </location>
</feature>
<feature type="compositionally biased region" description="Basic residues" evidence="3">
    <location>
        <begin position="238"/>
        <end position="248"/>
    </location>
</feature>
<feature type="compositionally biased region" description="Basic and acidic residues" evidence="3">
    <location>
        <begin position="249"/>
        <end position="268"/>
    </location>
</feature>
<feature type="compositionally biased region" description="Basic and acidic residues" evidence="3">
    <location>
        <begin position="297"/>
        <end position="328"/>
    </location>
</feature>
<feature type="compositionally biased region" description="Basic and acidic residues" evidence="3">
    <location>
        <begin position="363"/>
        <end position="375"/>
    </location>
</feature>
<feature type="compositionally biased region" description="Basic and acidic residues" evidence="3">
    <location>
        <begin position="392"/>
        <end position="409"/>
    </location>
</feature>
<feature type="compositionally biased region" description="Basic residues" evidence="3">
    <location>
        <begin position="416"/>
        <end position="427"/>
    </location>
</feature>
<feature type="compositionally biased region" description="Basic residues" evidence="3">
    <location>
        <begin position="437"/>
        <end position="446"/>
    </location>
</feature>
<feature type="modified residue" description="N-acetylmethionine" evidence="8 9 11">
    <location>
        <position position="1"/>
    </location>
</feature>
<feature type="modified residue" description="Phosphothreonine" evidence="9">
    <location>
        <position position="4"/>
    </location>
</feature>
<feature type="modified residue" description="Phosphothreonine" evidence="7">
    <location>
        <position position="116"/>
    </location>
</feature>
<feature type="modified residue" description="Phosphoserine" evidence="7 12">
    <location>
        <position position="128"/>
    </location>
</feature>
<feature type="modified residue" description="Phosphoserine" evidence="7 10 12">
    <location>
        <position position="130"/>
    </location>
</feature>
<feature type="modified residue" description="Phosphoserine" evidence="7">
    <location>
        <position position="139"/>
    </location>
</feature>
<feature type="cross-link" description="Glycyl lysine isopeptide (Lys-Gly) (interchain with G-Cter in SUMO2)" evidence="13">
    <location>
        <position position="46"/>
    </location>
</feature>
<feature type="splice variant" id="VSP_025479" description="In isoform 2." evidence="4">
    <original>MNVTPEVKSRGMKFAEEQLLKHGWTQGKGLGRKENGITQALRVTLKQDTHG</original>
    <variation>MDGLK</variation>
    <location>
        <begin position="1"/>
        <end position="51"/>
    </location>
</feature>
<feature type="splice variant" id="VSP_040831" description="In isoform 3." evidence="5">
    <original>MNVTP</original>
    <variation>MFPRSGPSND</variation>
    <location>
        <begin position="1"/>
        <end position="5"/>
    </location>
</feature>
<feature type="splice variant" id="VSP_025480" description="In isoform 2." evidence="4">
    <original>MATLTSGGEKPNKDLESCSDDDNQGSKSPKILTDEMLLQACEGRTAHKAARLGITMKAKLARLEAQEQAFLARL</original>
    <variation>VLEAVGNRVHPFSLPWFPWGLNSCLVCLINSQNFPNIVGSCDQPCCCLLRLPRPSAGIEIFRFRGSCHLLREQQ</variation>
    <location>
        <begin position="112"/>
        <end position="185"/>
    </location>
</feature>
<feature type="splice variant" id="VSP_025481" description="In isoform 2." evidence="4">
    <location>
        <begin position="186"/>
        <end position="446"/>
    </location>
</feature>
<protein>
    <recommendedName>
        <fullName>G patch domain-containing protein 4</fullName>
    </recommendedName>
</protein>
<organism>
    <name type="scientific">Homo sapiens</name>
    <name type="common">Human</name>
    <dbReference type="NCBI Taxonomy" id="9606"/>
    <lineage>
        <taxon>Eukaryota</taxon>
        <taxon>Metazoa</taxon>
        <taxon>Chordata</taxon>
        <taxon>Craniata</taxon>
        <taxon>Vertebrata</taxon>
        <taxon>Euteleostomi</taxon>
        <taxon>Mammalia</taxon>
        <taxon>Eutheria</taxon>
        <taxon>Euarchontoglires</taxon>
        <taxon>Primates</taxon>
        <taxon>Haplorrhini</taxon>
        <taxon>Catarrhini</taxon>
        <taxon>Hominidae</taxon>
        <taxon>Homo</taxon>
    </lineage>
</organism>